<gene>
    <name evidence="1" type="primary">rpl15</name>
    <name type="ordered locus">Hlac_2427</name>
</gene>
<accession>B9LSQ5</accession>
<name>RL15_HALLT</name>
<organism>
    <name type="scientific">Halorubrum lacusprofundi (strain ATCC 49239 / DSM 5036 / JCM 8891 / ACAM 34)</name>
    <dbReference type="NCBI Taxonomy" id="416348"/>
    <lineage>
        <taxon>Archaea</taxon>
        <taxon>Methanobacteriati</taxon>
        <taxon>Methanobacteriota</taxon>
        <taxon>Stenosarchaea group</taxon>
        <taxon>Halobacteria</taxon>
        <taxon>Halobacteriales</taxon>
        <taxon>Haloferacaceae</taxon>
        <taxon>Halorubrum</taxon>
    </lineage>
</organism>
<evidence type="ECO:0000255" key="1">
    <source>
        <dbReference type="HAMAP-Rule" id="MF_01341"/>
    </source>
</evidence>
<evidence type="ECO:0000256" key="2">
    <source>
        <dbReference type="SAM" id="MobiDB-lite"/>
    </source>
</evidence>
<evidence type="ECO:0000305" key="3"/>
<keyword id="KW-1185">Reference proteome</keyword>
<keyword id="KW-0687">Ribonucleoprotein</keyword>
<keyword id="KW-0689">Ribosomal protein</keyword>
<keyword id="KW-0694">RNA-binding</keyword>
<keyword id="KW-0699">rRNA-binding</keyword>
<comment type="function">
    <text evidence="1">Binds to the 23S rRNA.</text>
</comment>
<comment type="subunit">
    <text evidence="1">Part of the 50S ribosomal subunit.</text>
</comment>
<comment type="similarity">
    <text evidence="1">Belongs to the universal ribosomal protein uL15 family.</text>
</comment>
<reference key="1">
    <citation type="journal article" date="2016" name="Stand. Genomic Sci.">
        <title>Complete genome sequence of the Antarctic Halorubrum lacusprofundi type strain ACAM 34.</title>
        <authorList>
            <person name="Anderson I.J."/>
            <person name="DasSarma P."/>
            <person name="Lucas S."/>
            <person name="Copeland A."/>
            <person name="Lapidus A."/>
            <person name="Del Rio T.G."/>
            <person name="Tice H."/>
            <person name="Dalin E."/>
            <person name="Bruce D.C."/>
            <person name="Goodwin L."/>
            <person name="Pitluck S."/>
            <person name="Sims D."/>
            <person name="Brettin T.S."/>
            <person name="Detter J.C."/>
            <person name="Han C.S."/>
            <person name="Larimer F."/>
            <person name="Hauser L."/>
            <person name="Land M."/>
            <person name="Ivanova N."/>
            <person name="Richardson P."/>
            <person name="Cavicchioli R."/>
            <person name="DasSarma S."/>
            <person name="Woese C.R."/>
            <person name="Kyrpides N.C."/>
        </authorList>
    </citation>
    <scope>NUCLEOTIDE SEQUENCE [LARGE SCALE GENOMIC DNA]</scope>
    <source>
        <strain>ATCC 49239 / DSM 5036 / JCM 8891 / ACAM 34</strain>
    </source>
</reference>
<protein>
    <recommendedName>
        <fullName evidence="1">Large ribosomal subunit protein uL15</fullName>
    </recommendedName>
    <alternativeName>
        <fullName evidence="3">50S ribosomal protein L15</fullName>
    </alternativeName>
</protein>
<dbReference type="EMBL" id="CP001365">
    <property type="protein sequence ID" value="ACM58002.1"/>
    <property type="molecule type" value="Genomic_DNA"/>
</dbReference>
<dbReference type="RefSeq" id="WP_015911121.1">
    <property type="nucleotide sequence ID" value="NC_012029.1"/>
</dbReference>
<dbReference type="SMR" id="B9LSQ5"/>
<dbReference type="GeneID" id="7400545"/>
<dbReference type="KEGG" id="hla:Hlac_2427"/>
<dbReference type="eggNOG" id="arCOG00779">
    <property type="taxonomic scope" value="Archaea"/>
</dbReference>
<dbReference type="HOGENOM" id="CLU_109163_0_0_2"/>
<dbReference type="Proteomes" id="UP000000740">
    <property type="component" value="Chromosome 1"/>
</dbReference>
<dbReference type="GO" id="GO:0022625">
    <property type="term" value="C:cytosolic large ribosomal subunit"/>
    <property type="evidence" value="ECO:0007669"/>
    <property type="project" value="TreeGrafter"/>
</dbReference>
<dbReference type="GO" id="GO:0019843">
    <property type="term" value="F:rRNA binding"/>
    <property type="evidence" value="ECO:0007669"/>
    <property type="project" value="UniProtKB-UniRule"/>
</dbReference>
<dbReference type="GO" id="GO:0003735">
    <property type="term" value="F:structural constituent of ribosome"/>
    <property type="evidence" value="ECO:0007669"/>
    <property type="project" value="InterPro"/>
</dbReference>
<dbReference type="GO" id="GO:0006412">
    <property type="term" value="P:translation"/>
    <property type="evidence" value="ECO:0007669"/>
    <property type="project" value="UniProtKB-UniRule"/>
</dbReference>
<dbReference type="Gene3D" id="3.100.10.10">
    <property type="match status" value="1"/>
</dbReference>
<dbReference type="Gene3D" id="4.10.990.10">
    <property type="match status" value="1"/>
</dbReference>
<dbReference type="HAMAP" id="MF_01341">
    <property type="entry name" value="Ribosomal_uL15"/>
    <property type="match status" value="1"/>
</dbReference>
<dbReference type="InterPro" id="IPR027386">
    <property type="entry name" value="Rbsml_uL15_N"/>
</dbReference>
<dbReference type="InterPro" id="IPR030878">
    <property type="entry name" value="Ribosomal_uL15"/>
</dbReference>
<dbReference type="InterPro" id="IPR021131">
    <property type="entry name" value="Ribosomal_uL15/eL18"/>
</dbReference>
<dbReference type="InterPro" id="IPR036227">
    <property type="entry name" value="Ribosomal_uL15/eL18_sf"/>
</dbReference>
<dbReference type="InterPro" id="IPR001196">
    <property type="entry name" value="Ribosomal_uL15_CS"/>
</dbReference>
<dbReference type="PANTHER" id="PTHR11721">
    <property type="entry name" value="60S RIBOSOMAL PROTEIN L27A"/>
    <property type="match status" value="1"/>
</dbReference>
<dbReference type="PANTHER" id="PTHR11721:SF3">
    <property type="entry name" value="LARGE RIBOSOMAL SUBUNIT PROTEIN UL15"/>
    <property type="match status" value="1"/>
</dbReference>
<dbReference type="Pfam" id="PF00828">
    <property type="entry name" value="Ribosomal_L27A"/>
    <property type="match status" value="1"/>
</dbReference>
<dbReference type="SUPFAM" id="SSF52080">
    <property type="entry name" value="Ribosomal proteins L15p and L18e"/>
    <property type="match status" value="1"/>
</dbReference>
<dbReference type="PROSITE" id="PS00475">
    <property type="entry name" value="RIBOSOMAL_L15"/>
    <property type="match status" value="1"/>
</dbReference>
<sequence length="165" mass="17789">MTNKKRRQRGSRTHGGGTHKNRRGAGHRGGRGAAGRAKHEFHNYGPLGKYGFKRPESAQTEVLEVTVQKLDEDAALYAADDLAEEDGDAYVIDARDVVEDGYEADVVKVLGGGQVRRELRVTADAFTAGAVELIEEAGGEATLSERAEEAADESENTSDDEDDEA</sequence>
<feature type="chain" id="PRO_1000166299" description="Large ribosomal subunit protein uL15">
    <location>
        <begin position="1"/>
        <end position="165"/>
    </location>
</feature>
<feature type="region of interest" description="Disordered" evidence="2">
    <location>
        <begin position="1"/>
        <end position="39"/>
    </location>
</feature>
<feature type="region of interest" description="Disordered" evidence="2">
    <location>
        <begin position="137"/>
        <end position="165"/>
    </location>
</feature>
<feature type="compositionally biased region" description="Basic residues" evidence="2">
    <location>
        <begin position="1"/>
        <end position="30"/>
    </location>
</feature>
<feature type="compositionally biased region" description="Acidic residues" evidence="2">
    <location>
        <begin position="150"/>
        <end position="165"/>
    </location>
</feature>
<proteinExistence type="inferred from homology"/>